<comment type="function">
    <text evidence="1">The glycine cleavage system catalyzes the degradation of glycine.</text>
</comment>
<comment type="catalytic activity">
    <reaction evidence="1">
        <text>N(6)-[(R)-S(8)-aminomethyldihydrolipoyl]-L-lysyl-[protein] + (6S)-5,6,7,8-tetrahydrofolate = N(6)-[(R)-dihydrolipoyl]-L-lysyl-[protein] + (6R)-5,10-methylene-5,6,7,8-tetrahydrofolate + NH4(+)</text>
        <dbReference type="Rhea" id="RHEA:16945"/>
        <dbReference type="Rhea" id="RHEA-COMP:10475"/>
        <dbReference type="Rhea" id="RHEA-COMP:10492"/>
        <dbReference type="ChEBI" id="CHEBI:15636"/>
        <dbReference type="ChEBI" id="CHEBI:28938"/>
        <dbReference type="ChEBI" id="CHEBI:57453"/>
        <dbReference type="ChEBI" id="CHEBI:83100"/>
        <dbReference type="ChEBI" id="CHEBI:83143"/>
        <dbReference type="EC" id="2.1.2.10"/>
    </reaction>
</comment>
<comment type="subunit">
    <text evidence="1">The glycine cleavage system is composed of four proteins: P, T, L and H.</text>
</comment>
<comment type="similarity">
    <text evidence="1">Belongs to the GcvT family.</text>
</comment>
<protein>
    <recommendedName>
        <fullName evidence="1">Aminomethyltransferase</fullName>
        <ecNumber evidence="1">2.1.2.10</ecNumber>
    </recommendedName>
    <alternativeName>
        <fullName evidence="1">Glycine cleavage system T protein</fullName>
    </alternativeName>
</protein>
<proteinExistence type="inferred from homology"/>
<organism>
    <name type="scientific">Serratia proteamaculans (strain 568)</name>
    <dbReference type="NCBI Taxonomy" id="399741"/>
    <lineage>
        <taxon>Bacteria</taxon>
        <taxon>Pseudomonadati</taxon>
        <taxon>Pseudomonadota</taxon>
        <taxon>Gammaproteobacteria</taxon>
        <taxon>Enterobacterales</taxon>
        <taxon>Yersiniaceae</taxon>
        <taxon>Serratia</taxon>
    </lineage>
</organism>
<gene>
    <name evidence="1" type="primary">gcvT</name>
    <name type="ordered locus">Spro_3916</name>
</gene>
<accession>A8GIS1</accession>
<evidence type="ECO:0000255" key="1">
    <source>
        <dbReference type="HAMAP-Rule" id="MF_00259"/>
    </source>
</evidence>
<reference key="1">
    <citation type="submission" date="2007-09" db="EMBL/GenBank/DDBJ databases">
        <title>Complete sequence of chromosome of Serratia proteamaculans 568.</title>
        <authorList>
            <consortium name="US DOE Joint Genome Institute"/>
            <person name="Copeland A."/>
            <person name="Lucas S."/>
            <person name="Lapidus A."/>
            <person name="Barry K."/>
            <person name="Glavina del Rio T."/>
            <person name="Dalin E."/>
            <person name="Tice H."/>
            <person name="Pitluck S."/>
            <person name="Chain P."/>
            <person name="Malfatti S."/>
            <person name="Shin M."/>
            <person name="Vergez L."/>
            <person name="Schmutz J."/>
            <person name="Larimer F."/>
            <person name="Land M."/>
            <person name="Hauser L."/>
            <person name="Kyrpides N."/>
            <person name="Kim E."/>
            <person name="Taghavi S."/>
            <person name="Newman L."/>
            <person name="Vangronsveld J."/>
            <person name="van der Lelie D."/>
            <person name="Richardson P."/>
        </authorList>
    </citation>
    <scope>NUCLEOTIDE SEQUENCE [LARGE SCALE GENOMIC DNA]</scope>
    <source>
        <strain>568</strain>
    </source>
</reference>
<keyword id="KW-0032">Aminotransferase</keyword>
<keyword id="KW-0808">Transferase</keyword>
<feature type="chain" id="PRO_1000059089" description="Aminomethyltransferase">
    <location>
        <begin position="1"/>
        <end position="365"/>
    </location>
</feature>
<sequence length="365" mass="40082">MAKQTPLYDQHVACGARMVDFHGWMMPLHYGSQIDEHHAVRQDAGMFDVSHMTIVDLRGARTREFLRYLLANDVAKLTQPGKALYTGMLNASGGVIDDLIVYFLTEDYFRLVVNSATREKDLAWIEEHAAPYGVALTVRDDLALVAVQGPQAKERAATLFTPEQKSAVEGMKPFFGVQAGDLFIATTGYTGEAGYEIALPKEQVVDFWQKLLAAGVKPAGLGARDTLRLEAGMNLYGQEMDEGVSPLAANMGWTIAWLPEDRQFIGREALEKQREMGTEQLVGLIMTEKGVLRNELPVRFTDEAGQTHEGIITSGSFSPTLGFSIALARVPAGIGEQAIVQIRNREMPVKVTKPGFVRAGKPLTN</sequence>
<name>GCST_SERP5</name>
<dbReference type="EC" id="2.1.2.10" evidence="1"/>
<dbReference type="EMBL" id="CP000826">
    <property type="protein sequence ID" value="ABV43011.1"/>
    <property type="molecule type" value="Genomic_DNA"/>
</dbReference>
<dbReference type="SMR" id="A8GIS1"/>
<dbReference type="STRING" id="399741.Spro_3916"/>
<dbReference type="KEGG" id="spe:Spro_3916"/>
<dbReference type="eggNOG" id="COG0404">
    <property type="taxonomic scope" value="Bacteria"/>
</dbReference>
<dbReference type="HOGENOM" id="CLU_007884_10_2_6"/>
<dbReference type="OrthoDB" id="9774591at2"/>
<dbReference type="GO" id="GO:0005829">
    <property type="term" value="C:cytosol"/>
    <property type="evidence" value="ECO:0007669"/>
    <property type="project" value="TreeGrafter"/>
</dbReference>
<dbReference type="GO" id="GO:0005960">
    <property type="term" value="C:glycine cleavage complex"/>
    <property type="evidence" value="ECO:0007669"/>
    <property type="project" value="InterPro"/>
</dbReference>
<dbReference type="GO" id="GO:0004047">
    <property type="term" value="F:aminomethyltransferase activity"/>
    <property type="evidence" value="ECO:0007669"/>
    <property type="project" value="UniProtKB-UniRule"/>
</dbReference>
<dbReference type="GO" id="GO:0008483">
    <property type="term" value="F:transaminase activity"/>
    <property type="evidence" value="ECO:0007669"/>
    <property type="project" value="UniProtKB-KW"/>
</dbReference>
<dbReference type="GO" id="GO:0019464">
    <property type="term" value="P:glycine decarboxylation via glycine cleavage system"/>
    <property type="evidence" value="ECO:0007669"/>
    <property type="project" value="UniProtKB-UniRule"/>
</dbReference>
<dbReference type="FunFam" id="2.40.30.110:FF:000001">
    <property type="entry name" value="Aminomethyltransferase"/>
    <property type="match status" value="1"/>
</dbReference>
<dbReference type="FunFam" id="3.30.70.1400:FF:000001">
    <property type="entry name" value="Aminomethyltransferase"/>
    <property type="match status" value="1"/>
</dbReference>
<dbReference type="FunFam" id="4.10.1250.10:FF:000001">
    <property type="entry name" value="Aminomethyltransferase"/>
    <property type="match status" value="1"/>
</dbReference>
<dbReference type="Gene3D" id="2.40.30.110">
    <property type="entry name" value="Aminomethyltransferase beta-barrel domains"/>
    <property type="match status" value="1"/>
</dbReference>
<dbReference type="Gene3D" id="3.30.70.1400">
    <property type="entry name" value="Aminomethyltransferase beta-barrel domains"/>
    <property type="match status" value="1"/>
</dbReference>
<dbReference type="Gene3D" id="4.10.1250.10">
    <property type="entry name" value="Aminomethyltransferase fragment"/>
    <property type="match status" value="1"/>
</dbReference>
<dbReference type="Gene3D" id="3.30.1360.120">
    <property type="entry name" value="Probable tRNA modification gtpase trme, domain 1"/>
    <property type="match status" value="1"/>
</dbReference>
<dbReference type="HAMAP" id="MF_00259">
    <property type="entry name" value="GcvT"/>
    <property type="match status" value="1"/>
</dbReference>
<dbReference type="InterPro" id="IPR006223">
    <property type="entry name" value="GCS_T"/>
</dbReference>
<dbReference type="InterPro" id="IPR022903">
    <property type="entry name" value="GCS_T_bac"/>
</dbReference>
<dbReference type="InterPro" id="IPR013977">
    <property type="entry name" value="GCST_C"/>
</dbReference>
<dbReference type="InterPro" id="IPR006222">
    <property type="entry name" value="GCV_T_N"/>
</dbReference>
<dbReference type="InterPro" id="IPR028896">
    <property type="entry name" value="GcvT/YgfZ/DmdA"/>
</dbReference>
<dbReference type="InterPro" id="IPR029043">
    <property type="entry name" value="GcvT/YgfZ_C"/>
</dbReference>
<dbReference type="InterPro" id="IPR027266">
    <property type="entry name" value="TrmE/GcvT_dom1"/>
</dbReference>
<dbReference type="NCBIfam" id="TIGR00528">
    <property type="entry name" value="gcvT"/>
    <property type="match status" value="1"/>
</dbReference>
<dbReference type="NCBIfam" id="NF001567">
    <property type="entry name" value="PRK00389.1"/>
    <property type="match status" value="1"/>
</dbReference>
<dbReference type="PANTHER" id="PTHR43757">
    <property type="entry name" value="AMINOMETHYLTRANSFERASE"/>
    <property type="match status" value="1"/>
</dbReference>
<dbReference type="PANTHER" id="PTHR43757:SF2">
    <property type="entry name" value="AMINOMETHYLTRANSFERASE, MITOCHONDRIAL"/>
    <property type="match status" value="1"/>
</dbReference>
<dbReference type="Pfam" id="PF01571">
    <property type="entry name" value="GCV_T"/>
    <property type="match status" value="1"/>
</dbReference>
<dbReference type="Pfam" id="PF08669">
    <property type="entry name" value="GCV_T_C"/>
    <property type="match status" value="1"/>
</dbReference>
<dbReference type="PIRSF" id="PIRSF006487">
    <property type="entry name" value="GcvT"/>
    <property type="match status" value="1"/>
</dbReference>
<dbReference type="SUPFAM" id="SSF101790">
    <property type="entry name" value="Aminomethyltransferase beta-barrel domain"/>
    <property type="match status" value="1"/>
</dbReference>
<dbReference type="SUPFAM" id="SSF103025">
    <property type="entry name" value="Folate-binding domain"/>
    <property type="match status" value="1"/>
</dbReference>